<keyword id="KW-0378">Hydrolase</keyword>
<keyword id="KW-0460">Magnesium</keyword>
<keyword id="KW-1185">Reference proteome</keyword>
<accession>A8F5X7</accession>
<reference key="1">
    <citation type="submission" date="2007-08" db="EMBL/GenBank/DDBJ databases">
        <title>Complete sequence of Thermotoga lettingae TMO.</title>
        <authorList>
            <consortium name="US DOE Joint Genome Institute"/>
            <person name="Copeland A."/>
            <person name="Lucas S."/>
            <person name="Lapidus A."/>
            <person name="Barry K."/>
            <person name="Glavina del Rio T."/>
            <person name="Dalin E."/>
            <person name="Tice H."/>
            <person name="Pitluck S."/>
            <person name="Foster B."/>
            <person name="Bruce D."/>
            <person name="Schmutz J."/>
            <person name="Larimer F."/>
            <person name="Land M."/>
            <person name="Hauser L."/>
            <person name="Kyrpides N."/>
            <person name="Mikhailova N."/>
            <person name="Nelson K."/>
            <person name="Gogarten J.P."/>
            <person name="Noll K."/>
            <person name="Richardson P."/>
        </authorList>
    </citation>
    <scope>NUCLEOTIDE SEQUENCE [LARGE SCALE GENOMIC DNA]</scope>
    <source>
        <strain>ATCC BAA-301 / DSM 14385 / NBRC 107922 / TMO</strain>
    </source>
</reference>
<sequence length="224" mass="25015">MIDVLFLPEPVSQQHVCVVVDVLRATSTIVTALANGARCVVPVRKIAEAKKRKAENILICGERKGIKPKGFDLGNSPIEYFTVKDKEVILTTTNGTRAISMINSQKLYAACFLNLHAVIEQLRNHDHVTIVCSGQKGKIAYEDVLCAGAIVYELNDKLTDGARISRELWKQSRRKDLSKLLFESQHAQELAEYGFSSDITFCSQTDLYSIVPVFVEDRFIKQAP</sequence>
<name>COMB_PSELT</name>
<organism>
    <name type="scientific">Pseudothermotoga lettingae (strain ATCC BAA-301 / DSM 14385 / NBRC 107922 / TMO)</name>
    <name type="common">Thermotoga lettingae</name>
    <dbReference type="NCBI Taxonomy" id="416591"/>
    <lineage>
        <taxon>Bacteria</taxon>
        <taxon>Thermotogati</taxon>
        <taxon>Thermotogota</taxon>
        <taxon>Thermotogae</taxon>
        <taxon>Thermotogales</taxon>
        <taxon>Thermotogaceae</taxon>
        <taxon>Pseudothermotoga</taxon>
    </lineage>
</organism>
<feature type="chain" id="PRO_1000081394" description="Probable 2-phosphosulfolactate phosphatase">
    <location>
        <begin position="1"/>
        <end position="224"/>
    </location>
</feature>
<proteinExistence type="inferred from homology"/>
<evidence type="ECO:0000255" key="1">
    <source>
        <dbReference type="HAMAP-Rule" id="MF_00490"/>
    </source>
</evidence>
<dbReference type="EC" id="3.1.3.71" evidence="1"/>
<dbReference type="EMBL" id="CP000812">
    <property type="protein sequence ID" value="ABV33561.1"/>
    <property type="molecule type" value="Genomic_DNA"/>
</dbReference>
<dbReference type="RefSeq" id="WP_012003042.1">
    <property type="nucleotide sequence ID" value="NZ_BSDV01000001.1"/>
</dbReference>
<dbReference type="SMR" id="A8F5X7"/>
<dbReference type="STRING" id="416591.Tlet_0995"/>
<dbReference type="KEGG" id="tle:Tlet_0995"/>
<dbReference type="eggNOG" id="COG2045">
    <property type="taxonomic scope" value="Bacteria"/>
</dbReference>
<dbReference type="HOGENOM" id="CLU_070028_0_0_0"/>
<dbReference type="OrthoDB" id="4913at2"/>
<dbReference type="Proteomes" id="UP000002016">
    <property type="component" value="Chromosome"/>
</dbReference>
<dbReference type="GO" id="GO:0050532">
    <property type="term" value="F:2-phosphosulfolactate phosphatase activity"/>
    <property type="evidence" value="ECO:0007669"/>
    <property type="project" value="UniProtKB-UniRule"/>
</dbReference>
<dbReference type="GO" id="GO:0000287">
    <property type="term" value="F:magnesium ion binding"/>
    <property type="evidence" value="ECO:0007669"/>
    <property type="project" value="UniProtKB-UniRule"/>
</dbReference>
<dbReference type="GO" id="GO:0050545">
    <property type="term" value="F:sulfopyruvate decarboxylase activity"/>
    <property type="evidence" value="ECO:0007669"/>
    <property type="project" value="TreeGrafter"/>
</dbReference>
<dbReference type="FunFam" id="3.90.1560.10:FF:000001">
    <property type="entry name" value="Probable 2-phosphosulfolactate phosphatase"/>
    <property type="match status" value="1"/>
</dbReference>
<dbReference type="Gene3D" id="3.90.1560.10">
    <property type="entry name" value="ComB-like"/>
    <property type="match status" value="1"/>
</dbReference>
<dbReference type="HAMAP" id="MF_00490">
    <property type="entry name" value="ComB"/>
    <property type="match status" value="1"/>
</dbReference>
<dbReference type="InterPro" id="IPR005238">
    <property type="entry name" value="ComB-like"/>
</dbReference>
<dbReference type="InterPro" id="IPR036702">
    <property type="entry name" value="ComB-like_sf"/>
</dbReference>
<dbReference type="NCBIfam" id="NF002057">
    <property type="entry name" value="PRK00886.1-6"/>
    <property type="match status" value="1"/>
</dbReference>
<dbReference type="PANTHER" id="PTHR37311">
    <property type="entry name" value="2-PHOSPHOSULFOLACTATE PHOSPHATASE-RELATED"/>
    <property type="match status" value="1"/>
</dbReference>
<dbReference type="PANTHER" id="PTHR37311:SF1">
    <property type="entry name" value="2-PHOSPHOSULFOLACTATE PHOSPHATASE-RELATED"/>
    <property type="match status" value="1"/>
</dbReference>
<dbReference type="Pfam" id="PF04029">
    <property type="entry name" value="2-ph_phosp"/>
    <property type="match status" value="1"/>
</dbReference>
<dbReference type="SUPFAM" id="SSF142823">
    <property type="entry name" value="ComB-like"/>
    <property type="match status" value="1"/>
</dbReference>
<protein>
    <recommendedName>
        <fullName evidence="1">Probable 2-phosphosulfolactate phosphatase</fullName>
        <ecNumber evidence="1">3.1.3.71</ecNumber>
    </recommendedName>
</protein>
<comment type="catalytic activity">
    <reaction evidence="1">
        <text>(2R)-O-phospho-3-sulfolactate + H2O = (2R)-3-sulfolactate + phosphate</text>
        <dbReference type="Rhea" id="RHEA:23416"/>
        <dbReference type="ChEBI" id="CHEBI:15377"/>
        <dbReference type="ChEBI" id="CHEBI:15597"/>
        <dbReference type="ChEBI" id="CHEBI:43474"/>
        <dbReference type="ChEBI" id="CHEBI:58738"/>
        <dbReference type="EC" id="3.1.3.71"/>
    </reaction>
</comment>
<comment type="cofactor">
    <cofactor evidence="1">
        <name>Mg(2+)</name>
        <dbReference type="ChEBI" id="CHEBI:18420"/>
    </cofactor>
</comment>
<comment type="similarity">
    <text evidence="1">Belongs to the ComB family.</text>
</comment>
<gene>
    <name evidence="1" type="primary">comB</name>
    <name type="ordered locus">Tlet_0995</name>
</gene>